<feature type="chain" id="PRO_1000193562" description="Gamma-glutamyl phosphate reductase">
    <location>
        <begin position="1"/>
        <end position="427"/>
    </location>
</feature>
<evidence type="ECO:0000255" key="1">
    <source>
        <dbReference type="HAMAP-Rule" id="MF_00412"/>
    </source>
</evidence>
<gene>
    <name evidence="1" type="primary">proA</name>
    <name type="ordered locus">Avi_4280</name>
</gene>
<reference key="1">
    <citation type="journal article" date="2009" name="J. Bacteriol.">
        <title>Genome sequences of three Agrobacterium biovars help elucidate the evolution of multichromosome genomes in bacteria.</title>
        <authorList>
            <person name="Slater S.C."/>
            <person name="Goldman B.S."/>
            <person name="Goodner B."/>
            <person name="Setubal J.C."/>
            <person name="Farrand S.K."/>
            <person name="Nester E.W."/>
            <person name="Burr T.J."/>
            <person name="Banta L."/>
            <person name="Dickerman A.W."/>
            <person name="Paulsen I."/>
            <person name="Otten L."/>
            <person name="Suen G."/>
            <person name="Welch R."/>
            <person name="Almeida N.F."/>
            <person name="Arnold F."/>
            <person name="Burton O.T."/>
            <person name="Du Z."/>
            <person name="Ewing A."/>
            <person name="Godsy E."/>
            <person name="Heisel S."/>
            <person name="Houmiel K.L."/>
            <person name="Jhaveri J."/>
            <person name="Lu J."/>
            <person name="Miller N.M."/>
            <person name="Norton S."/>
            <person name="Chen Q."/>
            <person name="Phoolcharoen W."/>
            <person name="Ohlin V."/>
            <person name="Ondrusek D."/>
            <person name="Pride N."/>
            <person name="Stricklin S.L."/>
            <person name="Sun J."/>
            <person name="Wheeler C."/>
            <person name="Wilson L."/>
            <person name="Zhu H."/>
            <person name="Wood D.W."/>
        </authorList>
    </citation>
    <scope>NUCLEOTIDE SEQUENCE [LARGE SCALE GENOMIC DNA]</scope>
    <source>
        <strain>ATCC BAA-846 / DSM 112012 / S4</strain>
    </source>
</reference>
<proteinExistence type="inferred from homology"/>
<name>PROA_ALLAM</name>
<sequence>MLDTVAKADGIDALMLDIGAKAKAAARPLAIASADQKNAALMAMSEAILSGKSQIIAANAIDLKAAETAGLAASFIDRLTLNEERITAMAKGLREVAELKDPVSEVIAAWERPNGLKIERVRTPLGVIGVIYESRPNVTADAGALCLKSGNAVILRGGSDSVNSSRAIHACLVAGLVAAGLPDHAIQLVPVTDRAAVGAMLTGLNGTIDVIVPRGGKSLVARVQSDARVPVFAHLEGLCHVYVDGSADLDMAKSIVVNAKMRRTGICGSAETLLVDSAAIGSHLMPLLEALTEAGCEIRASATVLKVFPGLKAAVDEDWRTEYLDAIISVAVVDGIGGAIDHIARYSSNHTEAVIAEDPAVVERFFNEVDSAILLHNASTQFADGGEFGMGGEIGIATGKMHARGPVGVEQLTSFKYRVHGTGQIRP</sequence>
<organism>
    <name type="scientific">Allorhizobium ampelinum (strain ATCC BAA-846 / DSM 112012 / S4)</name>
    <name type="common">Agrobacterium vitis (strain S4)</name>
    <dbReference type="NCBI Taxonomy" id="311402"/>
    <lineage>
        <taxon>Bacteria</taxon>
        <taxon>Pseudomonadati</taxon>
        <taxon>Pseudomonadota</taxon>
        <taxon>Alphaproteobacteria</taxon>
        <taxon>Hyphomicrobiales</taxon>
        <taxon>Rhizobiaceae</taxon>
        <taxon>Rhizobium/Agrobacterium group</taxon>
        <taxon>Allorhizobium</taxon>
        <taxon>Allorhizobium ampelinum</taxon>
    </lineage>
</organism>
<protein>
    <recommendedName>
        <fullName evidence="1">Gamma-glutamyl phosphate reductase</fullName>
        <shortName evidence="1">GPR</shortName>
        <ecNumber evidence="1">1.2.1.41</ecNumber>
    </recommendedName>
    <alternativeName>
        <fullName evidence="1">Glutamate-5-semialdehyde dehydrogenase</fullName>
    </alternativeName>
    <alternativeName>
        <fullName evidence="1">Glutamyl-gamma-semialdehyde dehydrogenase</fullName>
        <shortName evidence="1">GSA dehydrogenase</shortName>
    </alternativeName>
</protein>
<keyword id="KW-0028">Amino-acid biosynthesis</keyword>
<keyword id="KW-0963">Cytoplasm</keyword>
<keyword id="KW-0521">NADP</keyword>
<keyword id="KW-0560">Oxidoreductase</keyword>
<keyword id="KW-0641">Proline biosynthesis</keyword>
<keyword id="KW-1185">Reference proteome</keyword>
<dbReference type="EC" id="1.2.1.41" evidence="1"/>
<dbReference type="EMBL" id="CP000633">
    <property type="protein sequence ID" value="ACM38100.1"/>
    <property type="molecule type" value="Genomic_DNA"/>
</dbReference>
<dbReference type="RefSeq" id="WP_015917511.1">
    <property type="nucleotide sequence ID" value="NC_011989.1"/>
</dbReference>
<dbReference type="SMR" id="B9JUH7"/>
<dbReference type="STRING" id="311402.Avi_4280"/>
<dbReference type="KEGG" id="avi:Avi_4280"/>
<dbReference type="eggNOG" id="COG0014">
    <property type="taxonomic scope" value="Bacteria"/>
</dbReference>
<dbReference type="HOGENOM" id="CLU_030231_0_0_5"/>
<dbReference type="UniPathway" id="UPA00098">
    <property type="reaction ID" value="UER00360"/>
</dbReference>
<dbReference type="Proteomes" id="UP000001596">
    <property type="component" value="Chromosome 1"/>
</dbReference>
<dbReference type="GO" id="GO:0005737">
    <property type="term" value="C:cytoplasm"/>
    <property type="evidence" value="ECO:0007669"/>
    <property type="project" value="UniProtKB-SubCell"/>
</dbReference>
<dbReference type="GO" id="GO:0004350">
    <property type="term" value="F:glutamate-5-semialdehyde dehydrogenase activity"/>
    <property type="evidence" value="ECO:0007669"/>
    <property type="project" value="UniProtKB-UniRule"/>
</dbReference>
<dbReference type="GO" id="GO:0050661">
    <property type="term" value="F:NADP binding"/>
    <property type="evidence" value="ECO:0007669"/>
    <property type="project" value="InterPro"/>
</dbReference>
<dbReference type="GO" id="GO:0055129">
    <property type="term" value="P:L-proline biosynthetic process"/>
    <property type="evidence" value="ECO:0007669"/>
    <property type="project" value="UniProtKB-UniRule"/>
</dbReference>
<dbReference type="CDD" id="cd07079">
    <property type="entry name" value="ALDH_F18-19_ProA-GPR"/>
    <property type="match status" value="1"/>
</dbReference>
<dbReference type="Gene3D" id="3.40.605.10">
    <property type="entry name" value="Aldehyde Dehydrogenase, Chain A, domain 1"/>
    <property type="match status" value="1"/>
</dbReference>
<dbReference type="Gene3D" id="3.40.309.10">
    <property type="entry name" value="Aldehyde Dehydrogenase, Chain A, domain 2"/>
    <property type="match status" value="1"/>
</dbReference>
<dbReference type="HAMAP" id="MF_00412">
    <property type="entry name" value="ProA"/>
    <property type="match status" value="1"/>
</dbReference>
<dbReference type="InterPro" id="IPR016161">
    <property type="entry name" value="Ald_DH/histidinol_DH"/>
</dbReference>
<dbReference type="InterPro" id="IPR016163">
    <property type="entry name" value="Ald_DH_C"/>
</dbReference>
<dbReference type="InterPro" id="IPR016162">
    <property type="entry name" value="Ald_DH_N"/>
</dbReference>
<dbReference type="InterPro" id="IPR015590">
    <property type="entry name" value="Aldehyde_DH_dom"/>
</dbReference>
<dbReference type="InterPro" id="IPR020593">
    <property type="entry name" value="G-glutamylP_reductase_CS"/>
</dbReference>
<dbReference type="InterPro" id="IPR012134">
    <property type="entry name" value="Glu-5-SA_DH"/>
</dbReference>
<dbReference type="InterPro" id="IPR000965">
    <property type="entry name" value="GPR_dom"/>
</dbReference>
<dbReference type="NCBIfam" id="NF001221">
    <property type="entry name" value="PRK00197.1"/>
    <property type="match status" value="1"/>
</dbReference>
<dbReference type="NCBIfam" id="TIGR00407">
    <property type="entry name" value="proA"/>
    <property type="match status" value="1"/>
</dbReference>
<dbReference type="PANTHER" id="PTHR11063:SF8">
    <property type="entry name" value="DELTA-1-PYRROLINE-5-CARBOXYLATE SYNTHASE"/>
    <property type="match status" value="1"/>
</dbReference>
<dbReference type="PANTHER" id="PTHR11063">
    <property type="entry name" value="GLUTAMATE SEMIALDEHYDE DEHYDROGENASE"/>
    <property type="match status" value="1"/>
</dbReference>
<dbReference type="Pfam" id="PF00171">
    <property type="entry name" value="Aldedh"/>
    <property type="match status" value="1"/>
</dbReference>
<dbReference type="PIRSF" id="PIRSF000151">
    <property type="entry name" value="GPR"/>
    <property type="match status" value="1"/>
</dbReference>
<dbReference type="SUPFAM" id="SSF53720">
    <property type="entry name" value="ALDH-like"/>
    <property type="match status" value="1"/>
</dbReference>
<dbReference type="PROSITE" id="PS01223">
    <property type="entry name" value="PROA"/>
    <property type="match status" value="1"/>
</dbReference>
<comment type="function">
    <text evidence="1">Catalyzes the NADPH-dependent reduction of L-glutamate 5-phosphate into L-glutamate 5-semialdehyde and phosphate. The product spontaneously undergoes cyclization to form 1-pyrroline-5-carboxylate.</text>
</comment>
<comment type="catalytic activity">
    <reaction evidence="1">
        <text>L-glutamate 5-semialdehyde + phosphate + NADP(+) = L-glutamyl 5-phosphate + NADPH + H(+)</text>
        <dbReference type="Rhea" id="RHEA:19541"/>
        <dbReference type="ChEBI" id="CHEBI:15378"/>
        <dbReference type="ChEBI" id="CHEBI:43474"/>
        <dbReference type="ChEBI" id="CHEBI:57783"/>
        <dbReference type="ChEBI" id="CHEBI:58066"/>
        <dbReference type="ChEBI" id="CHEBI:58274"/>
        <dbReference type="ChEBI" id="CHEBI:58349"/>
        <dbReference type="EC" id="1.2.1.41"/>
    </reaction>
</comment>
<comment type="pathway">
    <text evidence="1">Amino-acid biosynthesis; L-proline biosynthesis; L-glutamate 5-semialdehyde from L-glutamate: step 2/2.</text>
</comment>
<comment type="subcellular location">
    <subcellularLocation>
        <location evidence="1">Cytoplasm</location>
    </subcellularLocation>
</comment>
<comment type="similarity">
    <text evidence="1">Belongs to the gamma-glutamyl phosphate reductase family.</text>
</comment>
<accession>B9JUH7</accession>